<evidence type="ECO:0000255" key="1">
    <source>
        <dbReference type="PROSITE-ProRule" id="PRU00044"/>
    </source>
</evidence>
<evidence type="ECO:0000255" key="2">
    <source>
        <dbReference type="PROSITE-ProRule" id="PRU00062"/>
    </source>
</evidence>
<evidence type="ECO:0000255" key="3">
    <source>
        <dbReference type="PROSITE-ProRule" id="PRU00145"/>
    </source>
</evidence>
<evidence type="ECO:0000256" key="4">
    <source>
        <dbReference type="SAM" id="MobiDB-lite"/>
    </source>
</evidence>
<evidence type="ECO:0000269" key="5">
    <source>
    </source>
</evidence>
<accession>Q55E26</accession>
<accession>Q2MCX4</accession>
<protein>
    <recommendedName>
        <fullName>Rac guanine nucleotide exchange factor B</fullName>
    </recommendedName>
</protein>
<name>GXCB_DICDI</name>
<comment type="function">
    <text evidence="5">Involved in the regulation of the late steps of the endocytic pathway.</text>
</comment>
<comment type="subunit">
    <text>Binds to F-actin.</text>
</comment>
<comment type="subcellular location">
    <subcellularLocation>
        <location evidence="5">Late endosome</location>
    </subcellularLocation>
</comment>
<comment type="developmental stage">
    <text evidence="5">Expressed during vegetative growth and early stages of development.</text>
</comment>
<keyword id="KW-0254">Endocytosis</keyword>
<keyword id="KW-0967">Endosome</keyword>
<keyword id="KW-0344">Guanine-nucleotide releasing factor</keyword>
<keyword id="KW-1185">Reference proteome</keyword>
<keyword id="KW-0677">Repeat</keyword>
<organism>
    <name type="scientific">Dictyostelium discoideum</name>
    <name type="common">Social amoeba</name>
    <dbReference type="NCBI Taxonomy" id="44689"/>
    <lineage>
        <taxon>Eukaryota</taxon>
        <taxon>Amoebozoa</taxon>
        <taxon>Evosea</taxon>
        <taxon>Eumycetozoa</taxon>
        <taxon>Dictyostelia</taxon>
        <taxon>Dictyosteliales</taxon>
        <taxon>Dictyosteliaceae</taxon>
        <taxon>Dictyostelium</taxon>
    </lineage>
</organism>
<proteinExistence type="evidence at transcript level"/>
<reference key="1">
    <citation type="journal article" date="2006" name="Eur. J. Cell Biol.">
        <title>Trix, a novel Rac guanine-nucleotide exchange factor from Dictyostelium discoideum is an actin-binding protein and accumulates at endosomes.</title>
        <authorList>
            <person name="Strehle A."/>
            <person name="Schleicher M."/>
            <person name="Faix J."/>
        </authorList>
    </citation>
    <scope>NUCLEOTIDE SEQUENCE [MRNA]</scope>
    <scope>FUNCTION</scope>
    <scope>SUBCELLULAR LOCATION</scope>
    <scope>DEVELOPMENTAL STAGE</scope>
    <source>
        <strain>AX2</strain>
    </source>
</reference>
<reference key="2">
    <citation type="journal article" date="2005" name="Nature">
        <title>The genome of the social amoeba Dictyostelium discoideum.</title>
        <authorList>
            <person name="Eichinger L."/>
            <person name="Pachebat J.A."/>
            <person name="Gloeckner G."/>
            <person name="Rajandream M.A."/>
            <person name="Sucgang R."/>
            <person name="Berriman M."/>
            <person name="Song J."/>
            <person name="Olsen R."/>
            <person name="Szafranski K."/>
            <person name="Xu Q."/>
            <person name="Tunggal B."/>
            <person name="Kummerfeld S."/>
            <person name="Madera M."/>
            <person name="Konfortov B.A."/>
            <person name="Rivero F."/>
            <person name="Bankier A.T."/>
            <person name="Lehmann R."/>
            <person name="Hamlin N."/>
            <person name="Davies R."/>
            <person name="Gaudet P."/>
            <person name="Fey P."/>
            <person name="Pilcher K."/>
            <person name="Chen G."/>
            <person name="Saunders D."/>
            <person name="Sodergren E.J."/>
            <person name="Davis P."/>
            <person name="Kerhornou A."/>
            <person name="Nie X."/>
            <person name="Hall N."/>
            <person name="Anjard C."/>
            <person name="Hemphill L."/>
            <person name="Bason N."/>
            <person name="Farbrother P."/>
            <person name="Desany B."/>
            <person name="Just E."/>
            <person name="Morio T."/>
            <person name="Rost R."/>
            <person name="Churcher C.M."/>
            <person name="Cooper J."/>
            <person name="Haydock S."/>
            <person name="van Driessche N."/>
            <person name="Cronin A."/>
            <person name="Goodhead I."/>
            <person name="Muzny D.M."/>
            <person name="Mourier T."/>
            <person name="Pain A."/>
            <person name="Lu M."/>
            <person name="Harper D."/>
            <person name="Lindsay R."/>
            <person name="Hauser H."/>
            <person name="James K.D."/>
            <person name="Quiles M."/>
            <person name="Madan Babu M."/>
            <person name="Saito T."/>
            <person name="Buchrieser C."/>
            <person name="Wardroper A."/>
            <person name="Felder M."/>
            <person name="Thangavelu M."/>
            <person name="Johnson D."/>
            <person name="Knights A."/>
            <person name="Loulseged H."/>
            <person name="Mungall K.L."/>
            <person name="Oliver K."/>
            <person name="Price C."/>
            <person name="Quail M.A."/>
            <person name="Urushihara H."/>
            <person name="Hernandez J."/>
            <person name="Rabbinowitsch E."/>
            <person name="Steffen D."/>
            <person name="Sanders M."/>
            <person name="Ma J."/>
            <person name="Kohara Y."/>
            <person name="Sharp S."/>
            <person name="Simmonds M.N."/>
            <person name="Spiegler S."/>
            <person name="Tivey A."/>
            <person name="Sugano S."/>
            <person name="White B."/>
            <person name="Walker D."/>
            <person name="Woodward J.R."/>
            <person name="Winckler T."/>
            <person name="Tanaka Y."/>
            <person name="Shaulsky G."/>
            <person name="Schleicher M."/>
            <person name="Weinstock G.M."/>
            <person name="Rosenthal A."/>
            <person name="Cox E.C."/>
            <person name="Chisholm R.L."/>
            <person name="Gibbs R.A."/>
            <person name="Loomis W.F."/>
            <person name="Platzer M."/>
            <person name="Kay R.R."/>
            <person name="Williams J.G."/>
            <person name="Dear P.H."/>
            <person name="Noegel A.A."/>
            <person name="Barrell B.G."/>
            <person name="Kuspa A."/>
        </authorList>
    </citation>
    <scope>NUCLEOTIDE SEQUENCE [LARGE SCALE GENOMIC DNA]</scope>
    <source>
        <strain>AX4</strain>
    </source>
</reference>
<sequence length="1198" mass="134479">MFSNFFGSSKRNTIASSSSSSKKDKDNGKDESSKLKNSGSSTLPKPITNNESGNNFITSPSVSSPLISPLSSSPSPLLSSSSNSIQSTSHQQQQQHQGVITSLQMKPSCTSLTDDIEKKKQAKYDSSLEQTARKWVCDVLEIQLEDDKTFYELFKNGVLLCRLINKLRGGTIKRINESTISFKQLENIENYLKACKTLGLQSVNLFNSIDLHENKDISLVITNIVVLGKHASKIEGYNGIHLAGERKIIKITTTPVSPLFGGNHNNNNNNNNNNNTSNGDLSPVSITSASGGSSNYNSYSNNPLNKSSNGKKAKWRKSVKIPAVSSLNSDIRTKEAFKFSPELQKAAQDWIEEVTKEKFKLPSFSSSLKDGILLCRVINTIIPNTILYINNGNSSFKKMENIGNYLKGCLVVGLKKTDLFDTPDLFEEKNINFVISNIHVLGNHVNKMYSHLKLPLIKNIGNGGNGGNGGIGGGGGSDGSPLKMYSSIIHSKFGNGSSNTSSGNGGVIIPPEDMKDLKDWINHHLRAHHSLQIGSDMSNDLRNGVTLLTLLEELTLQKVGIFAREPVLPWHFMQNICLLLNFLRENSVHNVSDISPHDLFNGDIHSLCMITRLIRENFDTDHQMKSIPMDTRRQKVIEEIIATEQSYVKSLSTVYNLLIVPLLNSLDTNSPILSNDEISSIFGNWEHLLRSHINLLKEFKLKLNLPFNDLTIDDSNQNQNHNNIFGDSIFDSNITIGDVFLEKCEFLKDNYTNYINNYDNSYQRVKRLKKSNSNFEELVNTFEIFQDTHNGLDLYSYLIMPIQRIVRYILLLKEVIKYTPSTHPDYQMLQNAKENIKRVADHVNESKMAVENKRKILSIQDSIQNLQFNLMDKERTYIREGFLEIEDTFKKDSYFFLFSDLLLFVKYKPSEETGKEFKYKEVFYLDQVVDVSDILSDDEGEACVDGDDDGGEYEGGNGDATSGSADPEDQTLRRSCNSNNNNNSNSNKSNTVYSFEIETCEFSLVLLAESHTEKIEWMEDLRSCLQHQLIKEEDQLSSLSLSDNDDDNDADADVESSLNSISSPLLLLNNNNIINNNNNNNNNNNNNNNNNNNNNNCKNSNININSSIDNNSDNNNNDYDSKINSEENGDSSDEENKTSNRRSVSFKTHKRLESDETISDTESDDYELVCGRSKKSQPPPVPPRKITFSDTIKNIDNQ</sequence>
<dbReference type="EMBL" id="AM181592">
    <property type="protein sequence ID" value="CAJ57479.1"/>
    <property type="molecule type" value="mRNA"/>
</dbReference>
<dbReference type="EMBL" id="AAFI02000005">
    <property type="protein sequence ID" value="EAL72062.1"/>
    <property type="molecule type" value="Genomic_DNA"/>
</dbReference>
<dbReference type="RefSeq" id="XP_645955.1">
    <property type="nucleotide sequence ID" value="XM_640863.1"/>
</dbReference>
<dbReference type="SMR" id="Q55E26"/>
<dbReference type="FunCoup" id="Q55E26">
    <property type="interactions" value="63"/>
</dbReference>
<dbReference type="STRING" id="44689.Q55E26"/>
<dbReference type="PaxDb" id="44689-DDB0233173"/>
<dbReference type="EnsemblProtists" id="EAL72062">
    <property type="protein sequence ID" value="EAL72062"/>
    <property type="gene ID" value="DDB_G0269424"/>
</dbReference>
<dbReference type="GeneID" id="8616899"/>
<dbReference type="KEGG" id="ddi:DDB_G0269424"/>
<dbReference type="dictyBase" id="DDB_G0269424">
    <property type="gene designation" value="gxcB"/>
</dbReference>
<dbReference type="VEuPathDB" id="AmoebaDB:DDB_G0269424"/>
<dbReference type="eggNOG" id="KOG2046">
    <property type="taxonomic scope" value="Eukaryota"/>
</dbReference>
<dbReference type="eggNOG" id="KOG3522">
    <property type="taxonomic scope" value="Eukaryota"/>
</dbReference>
<dbReference type="HOGENOM" id="CLU_271096_0_0_1"/>
<dbReference type="InParanoid" id="Q55E26"/>
<dbReference type="OMA" id="LYSYLIM"/>
<dbReference type="PRO" id="PR:Q55E26"/>
<dbReference type="Proteomes" id="UP000002195">
    <property type="component" value="Chromosome 1"/>
</dbReference>
<dbReference type="GO" id="GO:0005938">
    <property type="term" value="C:cell cortex"/>
    <property type="evidence" value="ECO:0000314"/>
    <property type="project" value="dictyBase"/>
</dbReference>
<dbReference type="GO" id="GO:0005770">
    <property type="term" value="C:late endosome"/>
    <property type="evidence" value="ECO:0007669"/>
    <property type="project" value="UniProtKB-SubCell"/>
</dbReference>
<dbReference type="GO" id="GO:0051015">
    <property type="term" value="F:actin filament binding"/>
    <property type="evidence" value="ECO:0000314"/>
    <property type="project" value="dictyBase"/>
</dbReference>
<dbReference type="GO" id="GO:0005085">
    <property type="term" value="F:guanyl-nucleotide exchange factor activity"/>
    <property type="evidence" value="ECO:0007669"/>
    <property type="project" value="UniProtKB-KW"/>
</dbReference>
<dbReference type="GO" id="GO:0051764">
    <property type="term" value="P:actin crosslink formation"/>
    <property type="evidence" value="ECO:0000314"/>
    <property type="project" value="dictyBase"/>
</dbReference>
<dbReference type="GO" id="GO:0051017">
    <property type="term" value="P:actin filament bundle assembly"/>
    <property type="evidence" value="ECO:0000314"/>
    <property type="project" value="dictyBase"/>
</dbReference>
<dbReference type="GO" id="GO:0006897">
    <property type="term" value="P:endocytosis"/>
    <property type="evidence" value="ECO:0007669"/>
    <property type="project" value="UniProtKB-KW"/>
</dbReference>
<dbReference type="GO" id="GO:0006887">
    <property type="term" value="P:exocytosis"/>
    <property type="evidence" value="ECO:0000315"/>
    <property type="project" value="dictyBase"/>
</dbReference>
<dbReference type="GO" id="GO:0035556">
    <property type="term" value="P:intracellular signal transduction"/>
    <property type="evidence" value="ECO:0007669"/>
    <property type="project" value="InterPro"/>
</dbReference>
<dbReference type="CDD" id="cd00160">
    <property type="entry name" value="RhoGEF"/>
    <property type="match status" value="1"/>
</dbReference>
<dbReference type="FunFam" id="1.10.418.10:FF:000165">
    <property type="entry name" value="Rac guanine nucleotide exchange factor B"/>
    <property type="match status" value="2"/>
</dbReference>
<dbReference type="Gene3D" id="1.10.418.10">
    <property type="entry name" value="Calponin-like domain"/>
    <property type="match status" value="3"/>
</dbReference>
<dbReference type="Gene3D" id="1.20.900.10">
    <property type="entry name" value="Dbl homology (DH) domain"/>
    <property type="match status" value="1"/>
</dbReference>
<dbReference type="Gene3D" id="2.30.29.30">
    <property type="entry name" value="Pleckstrin-homology domain (PH domain)/Phosphotyrosine-binding domain (PTB)"/>
    <property type="match status" value="1"/>
</dbReference>
<dbReference type="InterPro" id="IPR001715">
    <property type="entry name" value="CH_dom"/>
</dbReference>
<dbReference type="InterPro" id="IPR036872">
    <property type="entry name" value="CH_dom_sf"/>
</dbReference>
<dbReference type="InterPro" id="IPR035899">
    <property type="entry name" value="DBL_dom_sf"/>
</dbReference>
<dbReference type="InterPro" id="IPR000219">
    <property type="entry name" value="DH_dom"/>
</dbReference>
<dbReference type="InterPro" id="IPR051092">
    <property type="entry name" value="FYVE_RhoGEF_PH"/>
</dbReference>
<dbReference type="InterPro" id="IPR001331">
    <property type="entry name" value="GDS_CDC24_CS"/>
</dbReference>
<dbReference type="InterPro" id="IPR011993">
    <property type="entry name" value="PH-like_dom_sf"/>
</dbReference>
<dbReference type="InterPro" id="IPR001849">
    <property type="entry name" value="PH_domain"/>
</dbReference>
<dbReference type="InterPro" id="IPR003096">
    <property type="entry name" value="SM22_calponin"/>
</dbReference>
<dbReference type="PANTHER" id="PTHR12673:SF78">
    <property type="entry name" value="DH DOMAIN-CONTAINING PROTEIN"/>
    <property type="match status" value="1"/>
</dbReference>
<dbReference type="PANTHER" id="PTHR12673">
    <property type="entry name" value="FACIOGENITAL DYSPLASIA PROTEIN"/>
    <property type="match status" value="1"/>
</dbReference>
<dbReference type="Pfam" id="PF00307">
    <property type="entry name" value="CH"/>
    <property type="match status" value="3"/>
</dbReference>
<dbReference type="Pfam" id="PF00621">
    <property type="entry name" value="RhoGEF"/>
    <property type="match status" value="1"/>
</dbReference>
<dbReference type="PRINTS" id="PR00888">
    <property type="entry name" value="SM22CALPONIN"/>
</dbReference>
<dbReference type="SMART" id="SM00033">
    <property type="entry name" value="CH"/>
    <property type="match status" value="3"/>
</dbReference>
<dbReference type="SMART" id="SM00233">
    <property type="entry name" value="PH"/>
    <property type="match status" value="1"/>
</dbReference>
<dbReference type="SMART" id="SM00325">
    <property type="entry name" value="RhoGEF"/>
    <property type="match status" value="1"/>
</dbReference>
<dbReference type="SUPFAM" id="SSF47576">
    <property type="entry name" value="Calponin-homology domain, CH-domain"/>
    <property type="match status" value="2"/>
</dbReference>
<dbReference type="SUPFAM" id="SSF48065">
    <property type="entry name" value="DBL homology domain (DH-domain)"/>
    <property type="match status" value="1"/>
</dbReference>
<dbReference type="SUPFAM" id="SSF50729">
    <property type="entry name" value="PH domain-like"/>
    <property type="match status" value="1"/>
</dbReference>
<dbReference type="PROSITE" id="PS50021">
    <property type="entry name" value="CH"/>
    <property type="match status" value="3"/>
</dbReference>
<dbReference type="PROSITE" id="PS00741">
    <property type="entry name" value="DH_1"/>
    <property type="match status" value="1"/>
</dbReference>
<dbReference type="PROSITE" id="PS50010">
    <property type="entry name" value="DH_2"/>
    <property type="match status" value="1"/>
</dbReference>
<dbReference type="PROSITE" id="PS50003">
    <property type="entry name" value="PH_DOMAIN"/>
    <property type="match status" value="1"/>
</dbReference>
<feature type="chain" id="PRO_0000328627" description="Rac guanine nucleotide exchange factor B">
    <location>
        <begin position="1"/>
        <end position="1198"/>
    </location>
</feature>
<feature type="domain" description="Calponin-homology (CH) 1" evidence="1">
    <location>
        <begin position="126"/>
        <end position="232"/>
    </location>
</feature>
<feature type="domain" description="Calponin-homology (CH) 2" evidence="1">
    <location>
        <begin position="341"/>
        <end position="449"/>
    </location>
</feature>
<feature type="domain" description="Calponin-homology (CH) 3" evidence="1">
    <location>
        <begin position="511"/>
        <end position="619"/>
    </location>
</feature>
<feature type="domain" description="DH" evidence="2">
    <location>
        <begin position="632"/>
        <end position="846"/>
    </location>
</feature>
<feature type="domain" description="PH" evidence="3">
    <location>
        <begin position="876"/>
        <end position="1026"/>
    </location>
</feature>
<feature type="region of interest" description="Disordered" evidence="4">
    <location>
        <begin position="1"/>
        <end position="104"/>
    </location>
</feature>
<feature type="region of interest" description="Disordered" evidence="4">
    <location>
        <begin position="260"/>
        <end position="284"/>
    </location>
</feature>
<feature type="region of interest" description="Disordered" evidence="4">
    <location>
        <begin position="940"/>
        <end position="989"/>
    </location>
</feature>
<feature type="region of interest" description="Disordered" evidence="4">
    <location>
        <begin position="1076"/>
        <end position="1198"/>
    </location>
</feature>
<feature type="compositionally biased region" description="Low complexity" evidence="4">
    <location>
        <begin position="8"/>
        <end position="20"/>
    </location>
</feature>
<feature type="compositionally biased region" description="Basic and acidic residues" evidence="4">
    <location>
        <begin position="21"/>
        <end position="34"/>
    </location>
</feature>
<feature type="compositionally biased region" description="Polar residues" evidence="4">
    <location>
        <begin position="35"/>
        <end position="58"/>
    </location>
</feature>
<feature type="compositionally biased region" description="Low complexity" evidence="4">
    <location>
        <begin position="59"/>
        <end position="97"/>
    </location>
</feature>
<feature type="compositionally biased region" description="Low complexity" evidence="4">
    <location>
        <begin position="263"/>
        <end position="275"/>
    </location>
</feature>
<feature type="compositionally biased region" description="Acidic residues" evidence="4">
    <location>
        <begin position="940"/>
        <end position="952"/>
    </location>
</feature>
<feature type="compositionally biased region" description="Low complexity" evidence="4">
    <location>
        <begin position="977"/>
        <end position="989"/>
    </location>
</feature>
<feature type="compositionally biased region" description="Low complexity" evidence="4">
    <location>
        <begin position="1076"/>
        <end position="1118"/>
    </location>
</feature>
<feature type="compositionally biased region" description="Acidic residues" evidence="4">
    <location>
        <begin position="1155"/>
        <end position="1167"/>
    </location>
</feature>
<feature type="compositionally biased region" description="Polar residues" evidence="4">
    <location>
        <begin position="1188"/>
        <end position="1198"/>
    </location>
</feature>
<gene>
    <name type="primary">gxcB</name>
    <name type="synonym">Trix</name>
    <name type="ORF">DDB_G0269424</name>
</gene>